<organism>
    <name type="scientific">Dinoroseobacter shibae (strain DSM 16493 / NCIMB 14021 / DFL 12)</name>
    <dbReference type="NCBI Taxonomy" id="398580"/>
    <lineage>
        <taxon>Bacteria</taxon>
        <taxon>Pseudomonadati</taxon>
        <taxon>Pseudomonadota</taxon>
        <taxon>Alphaproteobacteria</taxon>
        <taxon>Rhodobacterales</taxon>
        <taxon>Roseobacteraceae</taxon>
        <taxon>Dinoroseobacter</taxon>
    </lineage>
</organism>
<feature type="chain" id="PRO_1000084211" description="3-isopropylmalate dehydratase large subunit">
    <location>
        <begin position="1"/>
        <end position="467"/>
    </location>
</feature>
<feature type="binding site" evidence="1">
    <location>
        <position position="349"/>
    </location>
    <ligand>
        <name>[4Fe-4S] cluster</name>
        <dbReference type="ChEBI" id="CHEBI:49883"/>
    </ligand>
</feature>
<feature type="binding site" evidence="1">
    <location>
        <position position="408"/>
    </location>
    <ligand>
        <name>[4Fe-4S] cluster</name>
        <dbReference type="ChEBI" id="CHEBI:49883"/>
    </ligand>
</feature>
<feature type="binding site" evidence="1">
    <location>
        <position position="411"/>
    </location>
    <ligand>
        <name>[4Fe-4S] cluster</name>
        <dbReference type="ChEBI" id="CHEBI:49883"/>
    </ligand>
</feature>
<comment type="function">
    <text evidence="1">Catalyzes the isomerization between 2-isopropylmalate and 3-isopropylmalate, via the formation of 2-isopropylmaleate.</text>
</comment>
<comment type="catalytic activity">
    <reaction evidence="1">
        <text>(2R,3S)-3-isopropylmalate = (2S)-2-isopropylmalate</text>
        <dbReference type="Rhea" id="RHEA:32287"/>
        <dbReference type="ChEBI" id="CHEBI:1178"/>
        <dbReference type="ChEBI" id="CHEBI:35121"/>
        <dbReference type="EC" id="4.2.1.33"/>
    </reaction>
</comment>
<comment type="cofactor">
    <cofactor evidence="1">
        <name>[4Fe-4S] cluster</name>
        <dbReference type="ChEBI" id="CHEBI:49883"/>
    </cofactor>
    <text evidence="1">Binds 1 [4Fe-4S] cluster per subunit.</text>
</comment>
<comment type="pathway">
    <text evidence="1">Amino-acid biosynthesis; L-leucine biosynthesis; L-leucine from 3-methyl-2-oxobutanoate: step 2/4.</text>
</comment>
<comment type="subunit">
    <text evidence="1">Heterodimer of LeuC and LeuD.</text>
</comment>
<comment type="similarity">
    <text evidence="1">Belongs to the aconitase/IPM isomerase family. LeuC type 1 subfamily.</text>
</comment>
<sequence length="467" mass="50384">MTARTLYDKIWDAHLAHEAEDGTCLLYIDRHLVHEVTSPQAFEGLRMAGRTVRAPDKTIAVPDHNVPTTLGRENPDQMTEDSRIQVEALDKNAKDFGIHYYPVSDIRQGIVHIVGPEQGWTLPGMTVVCGDSHTATHGAFGALAHGIGTSEVEHVLATQTLIQKKSKNMKVEITGKLRPGVTAKDITLSVIGATGTAGGTGYVIEYCGEAIRDLSMEGRMTVCNMAIEGGARAGLIAPDEKTYEYVQGRPHAPKGAQWEAALAWWKTLYSDDDAHWDKVVTIKGEDIAPVVTWGTSPEDVLPISAMVPAPEDFTGGKVDAARRSLDYMGLTPGTPLSEIEIDTVFIGSCTNGRIEDLRAAAEILKGKKIAVKRAMVVPGSGLVRAQAEEEGLADIFKQAGFEWRMAGCSMCLAMNPDQLSEGERCASTSNRNFEGRQGYKGRTHLVSPAMAAAAAVTGKLTDVRDLM</sequence>
<reference key="1">
    <citation type="journal article" date="2010" name="ISME J.">
        <title>The complete genome sequence of the algal symbiont Dinoroseobacter shibae: a hitchhiker's guide to life in the sea.</title>
        <authorList>
            <person name="Wagner-Dobler I."/>
            <person name="Ballhausen B."/>
            <person name="Berger M."/>
            <person name="Brinkhoff T."/>
            <person name="Buchholz I."/>
            <person name="Bunk B."/>
            <person name="Cypionka H."/>
            <person name="Daniel R."/>
            <person name="Drepper T."/>
            <person name="Gerdts G."/>
            <person name="Hahnke S."/>
            <person name="Han C."/>
            <person name="Jahn D."/>
            <person name="Kalhoefer D."/>
            <person name="Kiss H."/>
            <person name="Klenk H.P."/>
            <person name="Kyrpides N."/>
            <person name="Liebl W."/>
            <person name="Liesegang H."/>
            <person name="Meincke L."/>
            <person name="Pati A."/>
            <person name="Petersen J."/>
            <person name="Piekarski T."/>
            <person name="Pommerenke C."/>
            <person name="Pradella S."/>
            <person name="Pukall R."/>
            <person name="Rabus R."/>
            <person name="Stackebrandt E."/>
            <person name="Thole S."/>
            <person name="Thompson L."/>
            <person name="Tielen P."/>
            <person name="Tomasch J."/>
            <person name="von Jan M."/>
            <person name="Wanphrut N."/>
            <person name="Wichels A."/>
            <person name="Zech H."/>
            <person name="Simon M."/>
        </authorList>
    </citation>
    <scope>NUCLEOTIDE SEQUENCE [LARGE SCALE GENOMIC DNA]</scope>
    <source>
        <strain>DSM 16493 / NCIMB 14021 / DFL 12</strain>
    </source>
</reference>
<accession>A8LKJ1</accession>
<dbReference type="EC" id="4.2.1.33" evidence="1"/>
<dbReference type="EMBL" id="CP000830">
    <property type="protein sequence ID" value="ABV91834.1"/>
    <property type="molecule type" value="Genomic_DNA"/>
</dbReference>
<dbReference type="RefSeq" id="WP_012176767.1">
    <property type="nucleotide sequence ID" value="NC_009952.1"/>
</dbReference>
<dbReference type="SMR" id="A8LKJ1"/>
<dbReference type="STRING" id="398580.Dshi_0085"/>
<dbReference type="KEGG" id="dsh:Dshi_0085"/>
<dbReference type="eggNOG" id="COG0065">
    <property type="taxonomic scope" value="Bacteria"/>
</dbReference>
<dbReference type="HOGENOM" id="CLU_006714_3_4_5"/>
<dbReference type="OrthoDB" id="9802769at2"/>
<dbReference type="UniPathway" id="UPA00048">
    <property type="reaction ID" value="UER00071"/>
</dbReference>
<dbReference type="Proteomes" id="UP000006833">
    <property type="component" value="Chromosome"/>
</dbReference>
<dbReference type="GO" id="GO:0003861">
    <property type="term" value="F:3-isopropylmalate dehydratase activity"/>
    <property type="evidence" value="ECO:0007669"/>
    <property type="project" value="UniProtKB-UniRule"/>
</dbReference>
<dbReference type="GO" id="GO:0051539">
    <property type="term" value="F:4 iron, 4 sulfur cluster binding"/>
    <property type="evidence" value="ECO:0007669"/>
    <property type="project" value="UniProtKB-KW"/>
</dbReference>
<dbReference type="GO" id="GO:0046872">
    <property type="term" value="F:metal ion binding"/>
    <property type="evidence" value="ECO:0007669"/>
    <property type="project" value="UniProtKB-KW"/>
</dbReference>
<dbReference type="GO" id="GO:0009098">
    <property type="term" value="P:L-leucine biosynthetic process"/>
    <property type="evidence" value="ECO:0007669"/>
    <property type="project" value="UniProtKB-UniRule"/>
</dbReference>
<dbReference type="CDD" id="cd01583">
    <property type="entry name" value="IPMI"/>
    <property type="match status" value="1"/>
</dbReference>
<dbReference type="FunFam" id="3.30.499.10:FF:000006">
    <property type="entry name" value="3-isopropylmalate dehydratase large subunit"/>
    <property type="match status" value="1"/>
</dbReference>
<dbReference type="FunFam" id="3.30.499.10:FF:000007">
    <property type="entry name" value="3-isopropylmalate dehydratase large subunit"/>
    <property type="match status" value="1"/>
</dbReference>
<dbReference type="Gene3D" id="3.30.499.10">
    <property type="entry name" value="Aconitase, domain 3"/>
    <property type="match status" value="2"/>
</dbReference>
<dbReference type="HAMAP" id="MF_01026">
    <property type="entry name" value="LeuC_type1"/>
    <property type="match status" value="1"/>
</dbReference>
<dbReference type="InterPro" id="IPR004430">
    <property type="entry name" value="3-IsopropMal_deHydase_lsu"/>
</dbReference>
<dbReference type="InterPro" id="IPR015931">
    <property type="entry name" value="Acnase/IPM_dHydase_lsu_aba_1/3"/>
</dbReference>
<dbReference type="InterPro" id="IPR001030">
    <property type="entry name" value="Acoase/IPM_deHydtase_lsu_aba"/>
</dbReference>
<dbReference type="InterPro" id="IPR018136">
    <property type="entry name" value="Aconitase_4Fe-4S_BS"/>
</dbReference>
<dbReference type="InterPro" id="IPR036008">
    <property type="entry name" value="Aconitase_4Fe-4S_dom"/>
</dbReference>
<dbReference type="InterPro" id="IPR050067">
    <property type="entry name" value="IPM_dehydratase_rel_enz"/>
</dbReference>
<dbReference type="InterPro" id="IPR033941">
    <property type="entry name" value="IPMI_cat"/>
</dbReference>
<dbReference type="NCBIfam" id="TIGR00170">
    <property type="entry name" value="leuC"/>
    <property type="match status" value="1"/>
</dbReference>
<dbReference type="NCBIfam" id="NF004016">
    <property type="entry name" value="PRK05478.1"/>
    <property type="match status" value="1"/>
</dbReference>
<dbReference type="NCBIfam" id="NF009116">
    <property type="entry name" value="PRK12466.1"/>
    <property type="match status" value="1"/>
</dbReference>
<dbReference type="PANTHER" id="PTHR43822:SF9">
    <property type="entry name" value="3-ISOPROPYLMALATE DEHYDRATASE"/>
    <property type="match status" value="1"/>
</dbReference>
<dbReference type="PANTHER" id="PTHR43822">
    <property type="entry name" value="HOMOACONITASE, MITOCHONDRIAL-RELATED"/>
    <property type="match status" value="1"/>
</dbReference>
<dbReference type="Pfam" id="PF00330">
    <property type="entry name" value="Aconitase"/>
    <property type="match status" value="1"/>
</dbReference>
<dbReference type="PRINTS" id="PR00415">
    <property type="entry name" value="ACONITASE"/>
</dbReference>
<dbReference type="SUPFAM" id="SSF53732">
    <property type="entry name" value="Aconitase iron-sulfur domain"/>
    <property type="match status" value="1"/>
</dbReference>
<dbReference type="PROSITE" id="PS00450">
    <property type="entry name" value="ACONITASE_1"/>
    <property type="match status" value="1"/>
</dbReference>
<dbReference type="PROSITE" id="PS01244">
    <property type="entry name" value="ACONITASE_2"/>
    <property type="match status" value="1"/>
</dbReference>
<proteinExistence type="inferred from homology"/>
<evidence type="ECO:0000255" key="1">
    <source>
        <dbReference type="HAMAP-Rule" id="MF_01026"/>
    </source>
</evidence>
<protein>
    <recommendedName>
        <fullName evidence="1">3-isopropylmalate dehydratase large subunit</fullName>
        <ecNumber evidence="1">4.2.1.33</ecNumber>
    </recommendedName>
    <alternativeName>
        <fullName evidence="1">Alpha-IPM isomerase</fullName>
        <shortName evidence="1">IPMI</shortName>
    </alternativeName>
    <alternativeName>
        <fullName evidence="1">Isopropylmalate isomerase</fullName>
    </alternativeName>
</protein>
<name>LEUC_DINSH</name>
<keyword id="KW-0004">4Fe-4S</keyword>
<keyword id="KW-0028">Amino-acid biosynthesis</keyword>
<keyword id="KW-0100">Branched-chain amino acid biosynthesis</keyword>
<keyword id="KW-0408">Iron</keyword>
<keyword id="KW-0411">Iron-sulfur</keyword>
<keyword id="KW-0432">Leucine biosynthesis</keyword>
<keyword id="KW-0456">Lyase</keyword>
<keyword id="KW-0479">Metal-binding</keyword>
<keyword id="KW-1185">Reference proteome</keyword>
<gene>
    <name evidence="1" type="primary">leuC</name>
    <name type="ordered locus">Dshi_0085</name>
</gene>